<evidence type="ECO:0000250" key="1"/>
<evidence type="ECO:0000255" key="2"/>
<evidence type="ECO:0000255" key="3">
    <source>
        <dbReference type="PROSITE-ProRule" id="PRU10095"/>
    </source>
</evidence>
<evidence type="ECO:0000305" key="4"/>
<feature type="transit peptide" description="Mitochondrion" evidence="2">
    <location>
        <begin position="1"/>
        <end position="28"/>
    </location>
</feature>
<feature type="chain" id="PRO_0000338597" description="Mitochondrial intermediate peptidase">
    <location>
        <begin position="29"/>
        <end position="776"/>
    </location>
</feature>
<feature type="active site" evidence="3">
    <location>
        <position position="562"/>
    </location>
</feature>
<feature type="binding site" evidence="3">
    <location>
        <position position="561"/>
    </location>
    <ligand>
        <name>Zn(2+)</name>
        <dbReference type="ChEBI" id="CHEBI:29105"/>
        <note>catalytic</note>
    </ligand>
</feature>
<feature type="binding site" evidence="3">
    <location>
        <position position="565"/>
    </location>
    <ligand>
        <name>Zn(2+)</name>
        <dbReference type="ChEBI" id="CHEBI:29105"/>
        <note>catalytic</note>
    </ligand>
</feature>
<feature type="binding site" evidence="3">
    <location>
        <position position="568"/>
    </location>
    <ligand>
        <name>Zn(2+)</name>
        <dbReference type="ChEBI" id="CHEBI:29105"/>
        <note>catalytic</note>
    </ligand>
</feature>
<keyword id="KW-0378">Hydrolase</keyword>
<keyword id="KW-0479">Metal-binding</keyword>
<keyword id="KW-0482">Metalloprotease</keyword>
<keyword id="KW-0496">Mitochondrion</keyword>
<keyword id="KW-0645">Protease</keyword>
<keyword id="KW-1185">Reference proteome</keyword>
<keyword id="KW-0809">Transit peptide</keyword>
<keyword id="KW-0862">Zinc</keyword>
<gene>
    <name type="primary">OCT1</name>
    <name type="ordered locus">YALI0A09988g</name>
</gene>
<dbReference type="EC" id="3.4.24.59"/>
<dbReference type="EMBL" id="CR382127">
    <property type="protein sequence ID" value="CAG83853.1"/>
    <property type="molecule type" value="Genomic_DNA"/>
</dbReference>
<dbReference type="RefSeq" id="XP_499926.1">
    <property type="nucleotide sequence ID" value="XM_499926.1"/>
</dbReference>
<dbReference type="SMR" id="Q6CHD6"/>
<dbReference type="FunCoup" id="Q6CHD6">
    <property type="interactions" value="673"/>
</dbReference>
<dbReference type="STRING" id="284591.Q6CHD6"/>
<dbReference type="EnsemblFungi" id="CAG83853">
    <property type="protein sequence ID" value="CAG83853"/>
    <property type="gene ID" value="YALI0_A09988g"/>
</dbReference>
<dbReference type="KEGG" id="yli:2905768"/>
<dbReference type="VEuPathDB" id="FungiDB:YALI0_A09988g"/>
<dbReference type="HOGENOM" id="CLU_001805_0_0_1"/>
<dbReference type="InParanoid" id="Q6CHD6"/>
<dbReference type="OMA" id="ALMFEYM"/>
<dbReference type="OrthoDB" id="107089at4891"/>
<dbReference type="Proteomes" id="UP000001300">
    <property type="component" value="Chromosome A"/>
</dbReference>
<dbReference type="GO" id="GO:0005759">
    <property type="term" value="C:mitochondrial matrix"/>
    <property type="evidence" value="ECO:0007669"/>
    <property type="project" value="UniProtKB-SubCell"/>
</dbReference>
<dbReference type="GO" id="GO:0005739">
    <property type="term" value="C:mitochondrion"/>
    <property type="evidence" value="ECO:0000318"/>
    <property type="project" value="GO_Central"/>
</dbReference>
<dbReference type="GO" id="GO:0046872">
    <property type="term" value="F:metal ion binding"/>
    <property type="evidence" value="ECO:0007669"/>
    <property type="project" value="UniProtKB-KW"/>
</dbReference>
<dbReference type="GO" id="GO:0004222">
    <property type="term" value="F:metalloendopeptidase activity"/>
    <property type="evidence" value="ECO:0000318"/>
    <property type="project" value="GO_Central"/>
</dbReference>
<dbReference type="GO" id="GO:0006518">
    <property type="term" value="P:peptide metabolic process"/>
    <property type="evidence" value="ECO:0000318"/>
    <property type="project" value="GO_Central"/>
</dbReference>
<dbReference type="GO" id="GO:0006627">
    <property type="term" value="P:protein processing involved in protein targeting to mitochondrion"/>
    <property type="evidence" value="ECO:0000318"/>
    <property type="project" value="GO_Central"/>
</dbReference>
<dbReference type="CDD" id="cd06457">
    <property type="entry name" value="M3A_MIP"/>
    <property type="match status" value="1"/>
</dbReference>
<dbReference type="Gene3D" id="3.40.390.10">
    <property type="entry name" value="Collagenase (Catalytic Domain)"/>
    <property type="match status" value="1"/>
</dbReference>
<dbReference type="Gene3D" id="1.10.1370.10">
    <property type="entry name" value="Neurolysin, domain 3"/>
    <property type="match status" value="1"/>
</dbReference>
<dbReference type="InterPro" id="IPR033851">
    <property type="entry name" value="M3A_MIP"/>
</dbReference>
<dbReference type="InterPro" id="IPR024079">
    <property type="entry name" value="MetalloPept_cat_dom_sf"/>
</dbReference>
<dbReference type="InterPro" id="IPR024077">
    <property type="entry name" value="Neurolysin/TOP_dom2"/>
</dbReference>
<dbReference type="InterPro" id="IPR045090">
    <property type="entry name" value="Pept_M3A_M3B"/>
</dbReference>
<dbReference type="InterPro" id="IPR001567">
    <property type="entry name" value="Pept_M3A_M3B_dom"/>
</dbReference>
<dbReference type="PANTHER" id="PTHR11804:SF79">
    <property type="entry name" value="MITOCHONDRIAL INTERMEDIATE PEPTIDASE"/>
    <property type="match status" value="1"/>
</dbReference>
<dbReference type="PANTHER" id="PTHR11804">
    <property type="entry name" value="PROTEASE M3 THIMET OLIGOPEPTIDASE-RELATED"/>
    <property type="match status" value="1"/>
</dbReference>
<dbReference type="Pfam" id="PF01432">
    <property type="entry name" value="Peptidase_M3"/>
    <property type="match status" value="1"/>
</dbReference>
<dbReference type="SUPFAM" id="SSF55486">
    <property type="entry name" value="Metalloproteases ('zincins'), catalytic domain"/>
    <property type="match status" value="1"/>
</dbReference>
<dbReference type="PROSITE" id="PS00142">
    <property type="entry name" value="ZINC_PROTEASE"/>
    <property type="match status" value="1"/>
</dbReference>
<proteinExistence type="inferred from homology"/>
<organism>
    <name type="scientific">Yarrowia lipolytica (strain CLIB 122 / E 150)</name>
    <name type="common">Yeast</name>
    <name type="synonym">Candida lipolytica</name>
    <dbReference type="NCBI Taxonomy" id="284591"/>
    <lineage>
        <taxon>Eukaryota</taxon>
        <taxon>Fungi</taxon>
        <taxon>Dikarya</taxon>
        <taxon>Ascomycota</taxon>
        <taxon>Saccharomycotina</taxon>
        <taxon>Dipodascomycetes</taxon>
        <taxon>Dipodascales</taxon>
        <taxon>Dipodascales incertae sedis</taxon>
        <taxon>Yarrowia</taxon>
    </lineage>
</organism>
<reference key="1">
    <citation type="journal article" date="2004" name="Nature">
        <title>Genome evolution in yeasts.</title>
        <authorList>
            <person name="Dujon B."/>
            <person name="Sherman D."/>
            <person name="Fischer G."/>
            <person name="Durrens P."/>
            <person name="Casaregola S."/>
            <person name="Lafontaine I."/>
            <person name="de Montigny J."/>
            <person name="Marck C."/>
            <person name="Neuveglise C."/>
            <person name="Talla E."/>
            <person name="Goffard N."/>
            <person name="Frangeul L."/>
            <person name="Aigle M."/>
            <person name="Anthouard V."/>
            <person name="Babour A."/>
            <person name="Barbe V."/>
            <person name="Barnay S."/>
            <person name="Blanchin S."/>
            <person name="Beckerich J.-M."/>
            <person name="Beyne E."/>
            <person name="Bleykasten C."/>
            <person name="Boisrame A."/>
            <person name="Boyer J."/>
            <person name="Cattolico L."/>
            <person name="Confanioleri F."/>
            <person name="de Daruvar A."/>
            <person name="Despons L."/>
            <person name="Fabre E."/>
            <person name="Fairhead C."/>
            <person name="Ferry-Dumazet H."/>
            <person name="Groppi A."/>
            <person name="Hantraye F."/>
            <person name="Hennequin C."/>
            <person name="Jauniaux N."/>
            <person name="Joyet P."/>
            <person name="Kachouri R."/>
            <person name="Kerrest A."/>
            <person name="Koszul R."/>
            <person name="Lemaire M."/>
            <person name="Lesur I."/>
            <person name="Ma L."/>
            <person name="Muller H."/>
            <person name="Nicaud J.-M."/>
            <person name="Nikolski M."/>
            <person name="Oztas S."/>
            <person name="Ozier-Kalogeropoulos O."/>
            <person name="Pellenz S."/>
            <person name="Potier S."/>
            <person name="Richard G.-F."/>
            <person name="Straub M.-L."/>
            <person name="Suleau A."/>
            <person name="Swennen D."/>
            <person name="Tekaia F."/>
            <person name="Wesolowski-Louvel M."/>
            <person name="Westhof E."/>
            <person name="Wirth B."/>
            <person name="Zeniou-Meyer M."/>
            <person name="Zivanovic Y."/>
            <person name="Bolotin-Fukuhara M."/>
            <person name="Thierry A."/>
            <person name="Bouchier C."/>
            <person name="Caudron B."/>
            <person name="Scarpelli C."/>
            <person name="Gaillardin C."/>
            <person name="Weissenbach J."/>
            <person name="Wincker P."/>
            <person name="Souciet J.-L."/>
        </authorList>
    </citation>
    <scope>NUCLEOTIDE SEQUENCE [LARGE SCALE GENOMIC DNA]</scope>
    <source>
        <strain>CLIB 122 / E 150</strain>
    </source>
</reference>
<accession>Q6CHD6</accession>
<protein>
    <recommendedName>
        <fullName>Mitochondrial intermediate peptidase</fullName>
        <shortName>MIP</shortName>
        <ecNumber>3.4.24.59</ecNumber>
    </recommendedName>
    <alternativeName>
        <fullName>Octapeptidyl aminopeptidase</fullName>
    </alternativeName>
</protein>
<name>PMIP_YARLI</name>
<sequence length="776" mass="87572">MRRFSTLSRRLQRVVPASSASTANTSPSPALYTGLEPKIKESQDSLIRAVFDNGDVWQDFSQKSVAKPKQSRSITGFINYLTNESDYETGLFMNDFLKTPAGFQKYTAASIEEAGQLIQQLLGALTQRDKLRHAITTFDRLSDVLCQVIDLAEFIRAAHPEQHFVQAAQEAHEQMYEYMNVLNTSVELYTVLDMVFKDSEIVNQLTHEEKVVGTLLLEDFKKSGVTLDDAGRENFVSLTTKISLLGRDFISSNHPKEDYITLTQGEAQGLDPQLAQQLSQGNSVYVPTGGVPGQLALRGMKNENSRKLLWSKMRESSDKSIESLEDLLVSRLELANLMGKESYADYLLSDKMAGNPENVMRFLNGLLDKTLPGAKKELSVLEQIKKQATGNPKSILQAWDKSYYASQLLYQKRNKTKTAHMLSEYFSVGTVVQGLSRIFDKIYGIRFVPTETKTGETWHHDVRRLDVVSETEGLIGIMYADLFQREGKSPNPAHFTVRCSREIYPDELAHMSSSPIAKVPTLNLNGKVFQIPTIALICDFTTPHDLYPSLLSYQEVETLFHEMGHAIHSMLGRTSLHNVCGTRCATDFVELPSVFMENFASNPESLALFARHYSSDSPLPYQQLERHLNEQSYFKDVEQYTQIKMAMLDQVLHGNILKSITNGHFNSQKLYDNLEKDRPLFPPSPSSWHGSFGHLFGYGASYYCYLLDRQMADIVWKKLFSKNPLSRDAGSRMKNEVLQWGGSRDPWECIAGVLEDPELAKGGSQAMEKIGNYDKH</sequence>
<comment type="function">
    <text evidence="1">Cleaves proteins, imported into the mitochondrion, to their mature size. While most mitochondrial precursor proteins are processed to the mature form in one step by mitochondrial processing peptidase (MPP), the sequential cleavage by MIP of an octapeptide after initial processing by MPP is a required step for a subgroup of nuclear-encoded precursor proteins destined for the matrix or the inner membrane (By similarity).</text>
</comment>
<comment type="catalytic activity">
    <reaction>
        <text>Release of an N-terminal octapeptide as second stage of processing of some proteins imported into the mitochondrion.</text>
        <dbReference type="EC" id="3.4.24.59"/>
    </reaction>
</comment>
<comment type="cofactor">
    <cofactor evidence="1">
        <name>Zn(2+)</name>
        <dbReference type="ChEBI" id="CHEBI:29105"/>
    </cofactor>
    <text evidence="1">Binds 1 zinc ion.</text>
</comment>
<comment type="subcellular location">
    <subcellularLocation>
        <location evidence="1">Mitochondrion matrix</location>
    </subcellularLocation>
</comment>
<comment type="similarity">
    <text evidence="4">Belongs to the peptidase M3 family.</text>
</comment>